<gene>
    <name type="primary">URA3</name>
</gene>
<proteinExistence type="inferred from homology"/>
<organism>
    <name type="scientific">Candida parapsilosis</name>
    <name type="common">Yeast</name>
    <dbReference type="NCBI Taxonomy" id="5480"/>
    <lineage>
        <taxon>Eukaryota</taxon>
        <taxon>Fungi</taxon>
        <taxon>Dikarya</taxon>
        <taxon>Ascomycota</taxon>
        <taxon>Saccharomycotina</taxon>
        <taxon>Pichiomycetes</taxon>
        <taxon>Debaryomycetaceae</taxon>
        <taxon>Candida/Lodderomyces clade</taxon>
        <taxon>Candida</taxon>
    </lineage>
</organism>
<evidence type="ECO:0000250" key="1"/>
<evidence type="ECO:0000255" key="2">
    <source>
        <dbReference type="PROSITE-ProRule" id="PRU10110"/>
    </source>
</evidence>
<evidence type="ECO:0000305" key="3"/>
<sequence>MVTNKSYRERSDTSSSPVTRRLFHLMEQKQSNLCASVDVRTTKELLSLVDKLGPYICLVKTHIDIIDDFSYEETILPLLELSKKHKFMIFEDRKFADIGNTVKHQYTGGVYKIAKWADLTNAHGVTGEGVVKGLKEGAQETTDEARGLLMLAELSSKGSLAYGEYSKKTIDIAKTDKDFVMGFIAQNYMGGTDEGFDWVIMTPGVGLDDKGDNLGQQYRTVDEVISKGTDVIIVGRGLFGKGRDPVVEGKRYKEAGWNAYLKRVAAGR</sequence>
<dbReference type="EC" id="4.1.1.23"/>
<dbReference type="EMBL" id="X99635">
    <property type="protein sequence ID" value="CAA67955.1"/>
    <property type="molecule type" value="Genomic_DNA"/>
</dbReference>
<dbReference type="SMR" id="Q12595"/>
<dbReference type="CGD" id="CAL0000150375">
    <property type="gene designation" value="URA3"/>
</dbReference>
<dbReference type="VEuPathDB" id="FungiDB:CPAR2_502890"/>
<dbReference type="UniPathway" id="UPA00070">
    <property type="reaction ID" value="UER00120"/>
</dbReference>
<dbReference type="GO" id="GO:0005829">
    <property type="term" value="C:cytosol"/>
    <property type="evidence" value="ECO:0007669"/>
    <property type="project" value="EnsemblFungi"/>
</dbReference>
<dbReference type="GO" id="GO:0004590">
    <property type="term" value="F:orotidine-5'-phosphate decarboxylase activity"/>
    <property type="evidence" value="ECO:0007669"/>
    <property type="project" value="UniProtKB-EC"/>
</dbReference>
<dbReference type="GO" id="GO:0006207">
    <property type="term" value="P:'de novo' pyrimidine nucleobase biosynthetic process"/>
    <property type="evidence" value="ECO:0007669"/>
    <property type="project" value="EnsemblFungi"/>
</dbReference>
<dbReference type="GO" id="GO:0044205">
    <property type="term" value="P:'de novo' UMP biosynthetic process"/>
    <property type="evidence" value="ECO:0007669"/>
    <property type="project" value="UniProtKB-UniPathway"/>
</dbReference>
<dbReference type="CDD" id="cd04725">
    <property type="entry name" value="OMP_decarboxylase_like"/>
    <property type="match status" value="1"/>
</dbReference>
<dbReference type="FunFam" id="3.20.20.70:FF:000114">
    <property type="entry name" value="Decarboxylase,orotidine phosphate"/>
    <property type="match status" value="1"/>
</dbReference>
<dbReference type="Gene3D" id="3.20.20.70">
    <property type="entry name" value="Aldolase class I"/>
    <property type="match status" value="1"/>
</dbReference>
<dbReference type="InterPro" id="IPR013785">
    <property type="entry name" value="Aldolase_TIM"/>
</dbReference>
<dbReference type="InterPro" id="IPR014732">
    <property type="entry name" value="OMPdecase"/>
</dbReference>
<dbReference type="InterPro" id="IPR018089">
    <property type="entry name" value="OMPdecase_AS"/>
</dbReference>
<dbReference type="InterPro" id="IPR001754">
    <property type="entry name" value="OMPdeCOase_dom"/>
</dbReference>
<dbReference type="InterPro" id="IPR011060">
    <property type="entry name" value="RibuloseP-bd_barrel"/>
</dbReference>
<dbReference type="NCBIfam" id="TIGR01740">
    <property type="entry name" value="pyrF"/>
    <property type="match status" value="1"/>
</dbReference>
<dbReference type="PANTHER" id="PTHR32119">
    <property type="entry name" value="OROTIDINE 5'-PHOSPHATE DECARBOXYLASE"/>
    <property type="match status" value="1"/>
</dbReference>
<dbReference type="PANTHER" id="PTHR32119:SF2">
    <property type="entry name" value="OROTIDINE 5'-PHOSPHATE DECARBOXYLASE"/>
    <property type="match status" value="1"/>
</dbReference>
<dbReference type="Pfam" id="PF00215">
    <property type="entry name" value="OMPdecase"/>
    <property type="match status" value="1"/>
</dbReference>
<dbReference type="SMART" id="SM00934">
    <property type="entry name" value="OMPdecase"/>
    <property type="match status" value="1"/>
</dbReference>
<dbReference type="SUPFAM" id="SSF51366">
    <property type="entry name" value="Ribulose-phoshate binding barrel"/>
    <property type="match status" value="1"/>
</dbReference>
<dbReference type="PROSITE" id="PS00156">
    <property type="entry name" value="OMPDECASE"/>
    <property type="match status" value="1"/>
</dbReference>
<protein>
    <recommendedName>
        <fullName>Orotidine 5'-phosphate decarboxylase</fullName>
        <ecNumber>4.1.1.23</ecNumber>
    </recommendedName>
    <alternativeName>
        <fullName>OMP decarboxylase</fullName>
        <shortName>OMPDCase</shortName>
        <shortName>OMPdecase</shortName>
    </alternativeName>
    <alternativeName>
        <fullName>Uridine 5'-monophosphate synthase</fullName>
        <shortName>UMP synthase</shortName>
    </alternativeName>
</protein>
<feature type="chain" id="PRO_0000134652" description="Orotidine 5'-phosphate decarboxylase">
    <location>
        <begin position="1"/>
        <end position="268"/>
    </location>
</feature>
<feature type="active site" description="Proton donor" evidence="2">
    <location>
        <position position="94"/>
    </location>
</feature>
<feature type="binding site" evidence="1">
    <location>
        <position position="38"/>
    </location>
    <ligand>
        <name>substrate</name>
    </ligand>
</feature>
<feature type="binding site" evidence="1">
    <location>
        <begin position="60"/>
        <end position="62"/>
    </location>
    <ligand>
        <name>substrate</name>
    </ligand>
</feature>
<feature type="binding site" evidence="1">
    <location>
        <begin position="92"/>
        <end position="101"/>
    </location>
    <ligand>
        <name>substrate</name>
    </ligand>
</feature>
<feature type="binding site" evidence="1">
    <location>
        <position position="218"/>
    </location>
    <ligand>
        <name>substrate</name>
    </ligand>
</feature>
<feature type="binding site" evidence="1">
    <location>
        <position position="236"/>
    </location>
    <ligand>
        <name>substrate</name>
    </ligand>
</feature>
<reference key="1">
    <citation type="submission" date="1996-08" db="EMBL/GenBank/DDBJ databases">
        <authorList>
            <person name="Nosek J."/>
        </authorList>
    </citation>
    <scope>NUCLEOTIDE SEQUENCE [GENOMIC DNA]</scope>
    <source>
        <strain>SR23 / CBS 7157</strain>
    </source>
</reference>
<name>PYRF_CANPA</name>
<comment type="catalytic activity">
    <reaction evidence="2">
        <text>orotidine 5'-phosphate + H(+) = UMP + CO2</text>
        <dbReference type="Rhea" id="RHEA:11596"/>
        <dbReference type="ChEBI" id="CHEBI:15378"/>
        <dbReference type="ChEBI" id="CHEBI:16526"/>
        <dbReference type="ChEBI" id="CHEBI:57538"/>
        <dbReference type="ChEBI" id="CHEBI:57865"/>
        <dbReference type="EC" id="4.1.1.23"/>
    </reaction>
</comment>
<comment type="pathway">
    <text>Pyrimidine metabolism; UMP biosynthesis via de novo pathway; UMP from orotate: step 2/2.</text>
</comment>
<comment type="similarity">
    <text evidence="3">Belongs to the OMP decarboxylase family.</text>
</comment>
<keyword id="KW-0210">Decarboxylase</keyword>
<keyword id="KW-0456">Lyase</keyword>
<keyword id="KW-0665">Pyrimidine biosynthesis</keyword>
<accession>Q12595</accession>